<reference key="1">
    <citation type="journal article" date="1995" name="J. Biol. Chem.">
        <title>Expression of a Drosophila GATA transcription factor in multiple tissues in the developing embryos. Identification of homozygous lethal mutants with P-element insertion at the promoter region.</title>
        <authorList>
            <person name="Lin W.H."/>
            <person name="Huang L.H."/>
            <person name="Yeh J.Y."/>
            <person name="Hoheisel J."/>
            <person name="Lehrach H."/>
            <person name="Sun Y.H."/>
            <person name="Tsai S.F."/>
        </authorList>
    </citation>
    <scope>NUCLEOTIDE SEQUENCE [MRNA]</scope>
    <scope>FUNCTION</scope>
    <scope>SUBCELLULAR LOCATION</scope>
    <scope>TISSUE SPECIFICITY</scope>
</reference>
<reference key="2">
    <citation type="journal article" date="2000" name="Science">
        <title>The genome sequence of Drosophila melanogaster.</title>
        <authorList>
            <person name="Adams M.D."/>
            <person name="Celniker S.E."/>
            <person name="Holt R.A."/>
            <person name="Evans C.A."/>
            <person name="Gocayne J.D."/>
            <person name="Amanatides P.G."/>
            <person name="Scherer S.E."/>
            <person name="Li P.W."/>
            <person name="Hoskins R.A."/>
            <person name="Galle R.F."/>
            <person name="George R.A."/>
            <person name="Lewis S.E."/>
            <person name="Richards S."/>
            <person name="Ashburner M."/>
            <person name="Henderson S.N."/>
            <person name="Sutton G.G."/>
            <person name="Wortman J.R."/>
            <person name="Yandell M.D."/>
            <person name="Zhang Q."/>
            <person name="Chen L.X."/>
            <person name="Brandon R.C."/>
            <person name="Rogers Y.-H.C."/>
            <person name="Blazej R.G."/>
            <person name="Champe M."/>
            <person name="Pfeiffer B.D."/>
            <person name="Wan K.H."/>
            <person name="Doyle C."/>
            <person name="Baxter E.G."/>
            <person name="Helt G."/>
            <person name="Nelson C.R."/>
            <person name="Miklos G.L.G."/>
            <person name="Abril J.F."/>
            <person name="Agbayani A."/>
            <person name="An H.-J."/>
            <person name="Andrews-Pfannkoch C."/>
            <person name="Baldwin D."/>
            <person name="Ballew R.M."/>
            <person name="Basu A."/>
            <person name="Baxendale J."/>
            <person name="Bayraktaroglu L."/>
            <person name="Beasley E.M."/>
            <person name="Beeson K.Y."/>
            <person name="Benos P.V."/>
            <person name="Berman B.P."/>
            <person name="Bhandari D."/>
            <person name="Bolshakov S."/>
            <person name="Borkova D."/>
            <person name="Botchan M.R."/>
            <person name="Bouck J."/>
            <person name="Brokstein P."/>
            <person name="Brottier P."/>
            <person name="Burtis K.C."/>
            <person name="Busam D.A."/>
            <person name="Butler H."/>
            <person name="Cadieu E."/>
            <person name="Center A."/>
            <person name="Chandra I."/>
            <person name="Cherry J.M."/>
            <person name="Cawley S."/>
            <person name="Dahlke C."/>
            <person name="Davenport L.B."/>
            <person name="Davies P."/>
            <person name="de Pablos B."/>
            <person name="Delcher A."/>
            <person name="Deng Z."/>
            <person name="Mays A.D."/>
            <person name="Dew I."/>
            <person name="Dietz S.M."/>
            <person name="Dodson K."/>
            <person name="Doup L.E."/>
            <person name="Downes M."/>
            <person name="Dugan-Rocha S."/>
            <person name="Dunkov B.C."/>
            <person name="Dunn P."/>
            <person name="Durbin K.J."/>
            <person name="Evangelista C.C."/>
            <person name="Ferraz C."/>
            <person name="Ferriera S."/>
            <person name="Fleischmann W."/>
            <person name="Fosler C."/>
            <person name="Gabrielian A.E."/>
            <person name="Garg N.S."/>
            <person name="Gelbart W.M."/>
            <person name="Glasser K."/>
            <person name="Glodek A."/>
            <person name="Gong F."/>
            <person name="Gorrell J.H."/>
            <person name="Gu Z."/>
            <person name="Guan P."/>
            <person name="Harris M."/>
            <person name="Harris N.L."/>
            <person name="Harvey D.A."/>
            <person name="Heiman T.J."/>
            <person name="Hernandez J.R."/>
            <person name="Houck J."/>
            <person name="Hostin D."/>
            <person name="Houston K.A."/>
            <person name="Howland T.J."/>
            <person name="Wei M.-H."/>
            <person name="Ibegwam C."/>
            <person name="Jalali M."/>
            <person name="Kalush F."/>
            <person name="Karpen G.H."/>
            <person name="Ke Z."/>
            <person name="Kennison J.A."/>
            <person name="Ketchum K.A."/>
            <person name="Kimmel B.E."/>
            <person name="Kodira C.D."/>
            <person name="Kraft C.L."/>
            <person name="Kravitz S."/>
            <person name="Kulp D."/>
            <person name="Lai Z."/>
            <person name="Lasko P."/>
            <person name="Lei Y."/>
            <person name="Levitsky A.A."/>
            <person name="Li J.H."/>
            <person name="Li Z."/>
            <person name="Liang Y."/>
            <person name="Lin X."/>
            <person name="Liu X."/>
            <person name="Mattei B."/>
            <person name="McIntosh T.C."/>
            <person name="McLeod M.P."/>
            <person name="McPherson D."/>
            <person name="Merkulov G."/>
            <person name="Milshina N.V."/>
            <person name="Mobarry C."/>
            <person name="Morris J."/>
            <person name="Moshrefi A."/>
            <person name="Mount S.M."/>
            <person name="Moy M."/>
            <person name="Murphy B."/>
            <person name="Murphy L."/>
            <person name="Muzny D.M."/>
            <person name="Nelson D.L."/>
            <person name="Nelson D.R."/>
            <person name="Nelson K.A."/>
            <person name="Nixon K."/>
            <person name="Nusskern D.R."/>
            <person name="Pacleb J.M."/>
            <person name="Palazzolo M."/>
            <person name="Pittman G.S."/>
            <person name="Pan S."/>
            <person name="Pollard J."/>
            <person name="Puri V."/>
            <person name="Reese M.G."/>
            <person name="Reinert K."/>
            <person name="Remington K."/>
            <person name="Saunders R.D.C."/>
            <person name="Scheeler F."/>
            <person name="Shen H."/>
            <person name="Shue B.C."/>
            <person name="Siden-Kiamos I."/>
            <person name="Simpson M."/>
            <person name="Skupski M.P."/>
            <person name="Smith T.J."/>
            <person name="Spier E."/>
            <person name="Spradling A.C."/>
            <person name="Stapleton M."/>
            <person name="Strong R."/>
            <person name="Sun E."/>
            <person name="Svirskas R."/>
            <person name="Tector C."/>
            <person name="Turner R."/>
            <person name="Venter E."/>
            <person name="Wang A.H."/>
            <person name="Wang X."/>
            <person name="Wang Z.-Y."/>
            <person name="Wassarman D.A."/>
            <person name="Weinstock G.M."/>
            <person name="Weissenbach J."/>
            <person name="Williams S.M."/>
            <person name="Woodage T."/>
            <person name="Worley K.C."/>
            <person name="Wu D."/>
            <person name="Yang S."/>
            <person name="Yao Q.A."/>
            <person name="Ye J."/>
            <person name="Yeh R.-F."/>
            <person name="Zaveri J.S."/>
            <person name="Zhan M."/>
            <person name="Zhang G."/>
            <person name="Zhao Q."/>
            <person name="Zheng L."/>
            <person name="Zheng X.H."/>
            <person name="Zhong F.N."/>
            <person name="Zhong W."/>
            <person name="Zhou X."/>
            <person name="Zhu S.C."/>
            <person name="Zhu X."/>
            <person name="Smith H.O."/>
            <person name="Gibbs R.A."/>
            <person name="Myers E.W."/>
            <person name="Rubin G.M."/>
            <person name="Venter J.C."/>
        </authorList>
    </citation>
    <scope>NUCLEOTIDE SEQUENCE [LARGE SCALE GENOMIC DNA]</scope>
    <source>
        <strain>Berkeley</strain>
    </source>
</reference>
<reference key="3">
    <citation type="journal article" date="2002" name="Genome Biol.">
        <title>Annotation of the Drosophila melanogaster euchromatic genome: a systematic review.</title>
        <authorList>
            <person name="Misra S."/>
            <person name="Crosby M.A."/>
            <person name="Mungall C.J."/>
            <person name="Matthews B.B."/>
            <person name="Campbell K.S."/>
            <person name="Hradecky P."/>
            <person name="Huang Y."/>
            <person name="Kaminker J.S."/>
            <person name="Millburn G.H."/>
            <person name="Prochnik S.E."/>
            <person name="Smith C.D."/>
            <person name="Tupy J.L."/>
            <person name="Whitfield E.J."/>
            <person name="Bayraktaroglu L."/>
            <person name="Berman B.P."/>
            <person name="Bettencourt B.R."/>
            <person name="Celniker S.E."/>
            <person name="de Grey A.D.N.J."/>
            <person name="Drysdale R.A."/>
            <person name="Harris N.L."/>
            <person name="Richter J."/>
            <person name="Russo S."/>
            <person name="Schroeder A.J."/>
            <person name="Shu S.Q."/>
            <person name="Stapleton M."/>
            <person name="Yamada C."/>
            <person name="Ashburner M."/>
            <person name="Gelbart W.M."/>
            <person name="Rubin G.M."/>
            <person name="Lewis S.E."/>
        </authorList>
    </citation>
    <scope>GENOME REANNOTATION</scope>
    <source>
        <strain>Berkeley</strain>
    </source>
</reference>
<reference key="4">
    <citation type="journal article" date="2002" name="Genome Biol.">
        <title>A Drosophila full-length cDNA resource.</title>
        <authorList>
            <person name="Stapleton M."/>
            <person name="Carlson J.W."/>
            <person name="Brokstein P."/>
            <person name="Yu C."/>
            <person name="Champe M."/>
            <person name="George R.A."/>
            <person name="Guarin H."/>
            <person name="Kronmiller B."/>
            <person name="Pacleb J.M."/>
            <person name="Park S."/>
            <person name="Wan K.H."/>
            <person name="Rubin G.M."/>
            <person name="Celniker S.E."/>
        </authorList>
    </citation>
    <scope>NUCLEOTIDE SEQUENCE [LARGE SCALE MRNA]</scope>
    <source>
        <strain>Berkeley</strain>
        <tissue>Embryo</tissue>
    </source>
</reference>
<feature type="chain" id="PRO_0000083462" description="GATA-binding factor C">
    <location>
        <begin position="1"/>
        <end position="486"/>
    </location>
</feature>
<feature type="zinc finger region" description="GATA-type 1" evidence="1">
    <location>
        <begin position="261"/>
        <end position="285"/>
    </location>
</feature>
<feature type="zinc finger region" description="GATA-type 2" evidence="1">
    <location>
        <begin position="321"/>
        <end position="345"/>
    </location>
</feature>
<feature type="region of interest" description="Disordered" evidence="2">
    <location>
        <begin position="1"/>
        <end position="65"/>
    </location>
</feature>
<feature type="region of interest" description="Disordered" evidence="2">
    <location>
        <begin position="161"/>
        <end position="198"/>
    </location>
</feature>
<feature type="region of interest" description="Disordered" evidence="2">
    <location>
        <begin position="232"/>
        <end position="260"/>
    </location>
</feature>
<feature type="compositionally biased region" description="Gly residues" evidence="2">
    <location>
        <begin position="20"/>
        <end position="34"/>
    </location>
</feature>
<feature type="compositionally biased region" description="Low complexity" evidence="2">
    <location>
        <begin position="40"/>
        <end position="65"/>
    </location>
</feature>
<feature type="compositionally biased region" description="Polar residues" evidence="2">
    <location>
        <begin position="166"/>
        <end position="176"/>
    </location>
</feature>
<feature type="compositionally biased region" description="Low complexity" evidence="2">
    <location>
        <begin position="236"/>
        <end position="251"/>
    </location>
</feature>
<evidence type="ECO:0000255" key="1">
    <source>
        <dbReference type="PROSITE-ProRule" id="PRU00094"/>
    </source>
</evidence>
<evidence type="ECO:0000256" key="2">
    <source>
        <dbReference type="SAM" id="MobiDB-lite"/>
    </source>
</evidence>
<evidence type="ECO:0000269" key="3">
    <source>
    </source>
</evidence>
<keyword id="KW-0238">DNA-binding</keyword>
<keyword id="KW-0479">Metal-binding</keyword>
<keyword id="KW-0539">Nucleus</keyword>
<keyword id="KW-1185">Reference proteome</keyword>
<keyword id="KW-0677">Repeat</keyword>
<keyword id="KW-0804">Transcription</keyword>
<keyword id="KW-0805">Transcription regulation</keyword>
<keyword id="KW-0862">Zinc</keyword>
<keyword id="KW-0863">Zinc-finger</keyword>
<gene>
    <name type="primary">grn</name>
    <name type="synonym">Gata-c</name>
    <name type="ORF">CG9656</name>
</gene>
<accession>P91623</accession>
<accession>Q9VHV4</accession>
<organism>
    <name type="scientific">Drosophila melanogaster</name>
    <name type="common">Fruit fly</name>
    <dbReference type="NCBI Taxonomy" id="7227"/>
    <lineage>
        <taxon>Eukaryota</taxon>
        <taxon>Metazoa</taxon>
        <taxon>Ecdysozoa</taxon>
        <taxon>Arthropoda</taxon>
        <taxon>Hexapoda</taxon>
        <taxon>Insecta</taxon>
        <taxon>Pterygota</taxon>
        <taxon>Neoptera</taxon>
        <taxon>Endopterygota</taxon>
        <taxon>Diptera</taxon>
        <taxon>Brachycera</taxon>
        <taxon>Muscomorpha</taxon>
        <taxon>Ephydroidea</taxon>
        <taxon>Drosophilidae</taxon>
        <taxon>Drosophila</taxon>
        <taxon>Sophophora</taxon>
    </lineage>
</organism>
<sequence>MDMTSTAEAAARSWYDSPRLGGGGSSGGGNGGGVSPQTNGLGSAGSSLAHSHHSLSSGASSAGSSVGVGSALGGGGGSGLDTSDMSAFYALESNGHHRRYYPSYHQHTSRMPSTHASPQVCRPHFHTPLSPWLTSEHKSFAPASAWSMGQFACPQEPQVEHKLGQMGQSHQTTAAGQHSFPFPPTPPKDSTPDSVQTGPSEYQAVMNAFMHQQATGSTSLTDASCALDIKPSIQNGSASGSSGSGTTHTSTPKQREEGRECVNCGATSTPLWRRDGTGHYLCNACGLYYKMNGQNRPLIKPKRRLTLQSLQSAAKRAGTSCANCKTTTTTLWRRNASGEPVCNACGLYYKLHNVNRPLTMKKEGIQTRNRKLSSKSKKKKGLGGGCLPIGGHLGMGDFKPLDPSKGFGGGFSASMAQHGHLSSGLHPAHAHMHGSWYTGGMGALGASSGLQGGFSTAGSLSGAVVPHSQPYHLGLSSMGTWRTDYT</sequence>
<proteinExistence type="evidence at transcript level"/>
<comment type="function">
    <text evidence="3">Transcription factor that is vital to the development of multiple organ systems. Binds to the core consensus sequence 5'-WGATAR-3'.</text>
</comment>
<comment type="subcellular location">
    <subcellularLocation>
        <location evidence="3">Nucleus</location>
    </subcellularLocation>
</comment>
<comment type="tissue specificity">
    <text evidence="3">Expressed in procephalic region at embryonic stages 6-10 and in the posterior spiracles, the gut, and the central nervous system at stages 11-13.</text>
</comment>
<dbReference type="EMBL" id="D50542">
    <property type="protein sequence ID" value="BAA09102.1"/>
    <property type="molecule type" value="mRNA"/>
</dbReference>
<dbReference type="EMBL" id="AE014297">
    <property type="protein sequence ID" value="AAF54195.1"/>
    <property type="molecule type" value="Genomic_DNA"/>
</dbReference>
<dbReference type="EMBL" id="AY071369">
    <property type="protein sequence ID" value="AAL48991.1"/>
    <property type="molecule type" value="mRNA"/>
</dbReference>
<dbReference type="PIR" id="A57601">
    <property type="entry name" value="A57601"/>
</dbReference>
<dbReference type="RefSeq" id="NP_731211.1">
    <property type="nucleotide sequence ID" value="NM_169206.3"/>
</dbReference>
<dbReference type="SMR" id="P91623"/>
<dbReference type="BioGRID" id="66145">
    <property type="interactions" value="4"/>
</dbReference>
<dbReference type="FunCoup" id="P91623">
    <property type="interactions" value="73"/>
</dbReference>
<dbReference type="IntAct" id="P91623">
    <property type="interactions" value="3"/>
</dbReference>
<dbReference type="GlyGen" id="P91623">
    <property type="glycosylation" value="1 site"/>
</dbReference>
<dbReference type="EnsemblMetazoa" id="FBtr0081808">
    <property type="protein sequence ID" value="FBpp0081304"/>
    <property type="gene ID" value="FBgn0001138"/>
</dbReference>
<dbReference type="GeneID" id="40962"/>
<dbReference type="KEGG" id="dme:Dmel_CG9656"/>
<dbReference type="UCSC" id="CG9656-RA">
    <property type="organism name" value="d. melanogaster"/>
</dbReference>
<dbReference type="AGR" id="FB:FBgn0001138"/>
<dbReference type="CTD" id="2896"/>
<dbReference type="FlyBase" id="FBgn0001138">
    <property type="gene designation" value="grn"/>
</dbReference>
<dbReference type="VEuPathDB" id="VectorBase:FBgn0001138"/>
<dbReference type="eggNOG" id="KOG1601">
    <property type="taxonomic scope" value="Eukaryota"/>
</dbReference>
<dbReference type="GeneTree" id="ENSGT00940000170958"/>
<dbReference type="HOGENOM" id="CLU_027524_3_0_1"/>
<dbReference type="InParanoid" id="P91623"/>
<dbReference type="OrthoDB" id="515401at2759"/>
<dbReference type="PhylomeDB" id="P91623"/>
<dbReference type="Reactome" id="R-DME-5689880">
    <property type="pathway name" value="Ub-specific processing proteases"/>
</dbReference>
<dbReference type="Reactome" id="R-DME-8939236">
    <property type="pathway name" value="RUNX1 regulates transcription of genes involved in differentiation of HSCs"/>
</dbReference>
<dbReference type="Reactome" id="R-DME-9018519">
    <property type="pathway name" value="Estrogen-dependent gene expression"/>
</dbReference>
<dbReference type="Reactome" id="R-DME-983231">
    <property type="pathway name" value="Factors involved in megakaryocyte development and platelet production"/>
</dbReference>
<dbReference type="BioGRID-ORCS" id="40962">
    <property type="hits" value="0 hits in 3 CRISPR screens"/>
</dbReference>
<dbReference type="ChiTaRS" id="grn">
    <property type="organism name" value="fly"/>
</dbReference>
<dbReference type="GenomeRNAi" id="40962"/>
<dbReference type="PRO" id="PR:P91623"/>
<dbReference type="Proteomes" id="UP000000803">
    <property type="component" value="Chromosome 3R"/>
</dbReference>
<dbReference type="Bgee" id="FBgn0001138">
    <property type="expression patterns" value="Expressed in peripheral glial cell (Drosophila) in insect leg and 154 other cell types or tissues"/>
</dbReference>
<dbReference type="ExpressionAtlas" id="P91623">
    <property type="expression patterns" value="baseline and differential"/>
</dbReference>
<dbReference type="GO" id="GO:0005634">
    <property type="term" value="C:nucleus"/>
    <property type="evidence" value="ECO:0000318"/>
    <property type="project" value="GO_Central"/>
</dbReference>
<dbReference type="GO" id="GO:0000981">
    <property type="term" value="F:DNA-binding transcription factor activity, RNA polymerase II-specific"/>
    <property type="evidence" value="ECO:0000250"/>
    <property type="project" value="FlyBase"/>
</dbReference>
<dbReference type="GO" id="GO:0000978">
    <property type="term" value="F:RNA polymerase II cis-regulatory region sequence-specific DNA binding"/>
    <property type="evidence" value="ECO:0000318"/>
    <property type="project" value="GO_Central"/>
</dbReference>
<dbReference type="GO" id="GO:0043565">
    <property type="term" value="F:sequence-specific DNA binding"/>
    <property type="evidence" value="ECO:0000314"/>
    <property type="project" value="FlyBase"/>
</dbReference>
<dbReference type="GO" id="GO:0008270">
    <property type="term" value="F:zinc ion binding"/>
    <property type="evidence" value="ECO:0007669"/>
    <property type="project" value="UniProtKB-KW"/>
</dbReference>
<dbReference type="GO" id="GO:0009887">
    <property type="term" value="P:animal organ morphogenesis"/>
    <property type="evidence" value="ECO:0000315"/>
    <property type="project" value="FlyBase"/>
</dbReference>
<dbReference type="GO" id="GO:0045165">
    <property type="term" value="P:cell fate commitment"/>
    <property type="evidence" value="ECO:0000318"/>
    <property type="project" value="GO_Central"/>
</dbReference>
<dbReference type="GO" id="GO:0008045">
    <property type="term" value="P:motor neuron axon guidance"/>
    <property type="evidence" value="ECO:0000315"/>
    <property type="project" value="FlyBase"/>
</dbReference>
<dbReference type="GO" id="GO:0000122">
    <property type="term" value="P:negative regulation of transcription by RNA polymerase II"/>
    <property type="evidence" value="ECO:0000318"/>
    <property type="project" value="GO_Central"/>
</dbReference>
<dbReference type="GO" id="GO:0045944">
    <property type="term" value="P:positive regulation of transcription by RNA polymerase II"/>
    <property type="evidence" value="ECO:0000318"/>
    <property type="project" value="GO_Central"/>
</dbReference>
<dbReference type="GO" id="GO:0009888">
    <property type="term" value="P:tissue development"/>
    <property type="evidence" value="ECO:0000315"/>
    <property type="project" value="FlyBase"/>
</dbReference>
<dbReference type="CDD" id="cd00202">
    <property type="entry name" value="ZnF_GATA"/>
    <property type="match status" value="2"/>
</dbReference>
<dbReference type="FunFam" id="3.30.50.10:FF:000036">
    <property type="entry name" value="Endothelial transcription factor GATA-2"/>
    <property type="match status" value="1"/>
</dbReference>
<dbReference type="FunFam" id="3.30.50.10:FF:000032">
    <property type="entry name" value="Transcription factor GATA-3"/>
    <property type="match status" value="1"/>
</dbReference>
<dbReference type="Gene3D" id="3.30.50.10">
    <property type="entry name" value="Erythroid Transcription Factor GATA-1, subunit A"/>
    <property type="match status" value="2"/>
</dbReference>
<dbReference type="InterPro" id="IPR039355">
    <property type="entry name" value="Transcription_factor_GATA"/>
</dbReference>
<dbReference type="InterPro" id="IPR000679">
    <property type="entry name" value="Znf_GATA"/>
</dbReference>
<dbReference type="InterPro" id="IPR013088">
    <property type="entry name" value="Znf_NHR/GATA"/>
</dbReference>
<dbReference type="PANTHER" id="PTHR10071:SF281">
    <property type="entry name" value="BOX A-BINDING FACTOR-RELATED"/>
    <property type="match status" value="1"/>
</dbReference>
<dbReference type="PANTHER" id="PTHR10071">
    <property type="entry name" value="TRANSCRIPTION FACTOR GATA FAMILY MEMBER"/>
    <property type="match status" value="1"/>
</dbReference>
<dbReference type="Pfam" id="PF00320">
    <property type="entry name" value="GATA"/>
    <property type="match status" value="2"/>
</dbReference>
<dbReference type="PRINTS" id="PR00619">
    <property type="entry name" value="GATAZNFINGER"/>
</dbReference>
<dbReference type="SMART" id="SM00401">
    <property type="entry name" value="ZnF_GATA"/>
    <property type="match status" value="2"/>
</dbReference>
<dbReference type="SUPFAM" id="SSF57716">
    <property type="entry name" value="Glucocorticoid receptor-like (DNA-binding domain)"/>
    <property type="match status" value="2"/>
</dbReference>
<dbReference type="PROSITE" id="PS00344">
    <property type="entry name" value="GATA_ZN_FINGER_1"/>
    <property type="match status" value="2"/>
</dbReference>
<dbReference type="PROSITE" id="PS50114">
    <property type="entry name" value="GATA_ZN_FINGER_2"/>
    <property type="match status" value="2"/>
</dbReference>
<protein>
    <recommendedName>
        <fullName>GATA-binding factor C</fullName>
    </recommendedName>
    <alternativeName>
        <fullName>Protein grain</fullName>
    </alternativeName>
    <alternativeName>
        <fullName>Transcription factor GATA-C</fullName>
    </alternativeName>
    <alternativeName>
        <fullName>dGATA-C</fullName>
    </alternativeName>
</protein>
<name>GATAC_DROME</name>